<protein>
    <recommendedName>
        <fullName evidence="1">Large ribosomal subunit protein bL17</fullName>
    </recommendedName>
    <alternativeName>
        <fullName evidence="2">50S ribosomal protein L17</fullName>
    </alternativeName>
</protein>
<dbReference type="EMBL" id="CP001197">
    <property type="protein sequence ID" value="ACL07067.1"/>
    <property type="molecule type" value="Genomic_DNA"/>
</dbReference>
<dbReference type="SMR" id="B8DNL0"/>
<dbReference type="STRING" id="883.DvMF_0106"/>
<dbReference type="KEGG" id="dvm:DvMF_0106"/>
<dbReference type="eggNOG" id="COG0203">
    <property type="taxonomic scope" value="Bacteria"/>
</dbReference>
<dbReference type="HOGENOM" id="CLU_074407_2_0_7"/>
<dbReference type="OrthoDB" id="9809073at2"/>
<dbReference type="GO" id="GO:0022625">
    <property type="term" value="C:cytosolic large ribosomal subunit"/>
    <property type="evidence" value="ECO:0007669"/>
    <property type="project" value="TreeGrafter"/>
</dbReference>
<dbReference type="GO" id="GO:0003735">
    <property type="term" value="F:structural constituent of ribosome"/>
    <property type="evidence" value="ECO:0007669"/>
    <property type="project" value="InterPro"/>
</dbReference>
<dbReference type="GO" id="GO:0006412">
    <property type="term" value="P:translation"/>
    <property type="evidence" value="ECO:0007669"/>
    <property type="project" value="UniProtKB-UniRule"/>
</dbReference>
<dbReference type="Gene3D" id="3.90.1030.10">
    <property type="entry name" value="Ribosomal protein L17"/>
    <property type="match status" value="1"/>
</dbReference>
<dbReference type="HAMAP" id="MF_01368">
    <property type="entry name" value="Ribosomal_bL17"/>
    <property type="match status" value="1"/>
</dbReference>
<dbReference type="InterPro" id="IPR000456">
    <property type="entry name" value="Ribosomal_bL17"/>
</dbReference>
<dbReference type="InterPro" id="IPR036373">
    <property type="entry name" value="Ribosomal_bL17_sf"/>
</dbReference>
<dbReference type="NCBIfam" id="TIGR00059">
    <property type="entry name" value="L17"/>
    <property type="match status" value="1"/>
</dbReference>
<dbReference type="PANTHER" id="PTHR14413:SF16">
    <property type="entry name" value="LARGE RIBOSOMAL SUBUNIT PROTEIN BL17M"/>
    <property type="match status" value="1"/>
</dbReference>
<dbReference type="PANTHER" id="PTHR14413">
    <property type="entry name" value="RIBOSOMAL PROTEIN L17"/>
    <property type="match status" value="1"/>
</dbReference>
<dbReference type="Pfam" id="PF01196">
    <property type="entry name" value="Ribosomal_L17"/>
    <property type="match status" value="1"/>
</dbReference>
<dbReference type="SUPFAM" id="SSF64263">
    <property type="entry name" value="Prokaryotic ribosomal protein L17"/>
    <property type="match status" value="1"/>
</dbReference>
<accession>B8DNL0</accession>
<reference key="1">
    <citation type="submission" date="2008-10" db="EMBL/GenBank/DDBJ databases">
        <title>Complete sequence of Desulfovibrio vulgaris str. 'Miyazaki F'.</title>
        <authorList>
            <person name="Lucas S."/>
            <person name="Copeland A."/>
            <person name="Lapidus A."/>
            <person name="Glavina del Rio T."/>
            <person name="Dalin E."/>
            <person name="Tice H."/>
            <person name="Bruce D."/>
            <person name="Goodwin L."/>
            <person name="Pitluck S."/>
            <person name="Sims D."/>
            <person name="Brettin T."/>
            <person name="Detter J.C."/>
            <person name="Han C."/>
            <person name="Larimer F."/>
            <person name="Land M."/>
            <person name="Hauser L."/>
            <person name="Kyrpides N."/>
            <person name="Mikhailova N."/>
            <person name="Hazen T.C."/>
            <person name="Richardson P."/>
        </authorList>
    </citation>
    <scope>NUCLEOTIDE SEQUENCE [LARGE SCALE GENOMIC DNA]</scope>
    <source>
        <strain>DSM 19637 / Miyazaki F</strain>
    </source>
</reference>
<organism>
    <name type="scientific">Nitratidesulfovibrio vulgaris (strain DSM 19637 / Miyazaki F)</name>
    <name type="common">Desulfovibrio vulgaris</name>
    <dbReference type="NCBI Taxonomy" id="883"/>
    <lineage>
        <taxon>Bacteria</taxon>
        <taxon>Pseudomonadati</taxon>
        <taxon>Thermodesulfobacteriota</taxon>
        <taxon>Desulfovibrionia</taxon>
        <taxon>Desulfovibrionales</taxon>
        <taxon>Desulfovibrionaceae</taxon>
        <taxon>Nitratidesulfovibrio</taxon>
    </lineage>
</organism>
<keyword id="KW-0687">Ribonucleoprotein</keyword>
<keyword id="KW-0689">Ribosomal protein</keyword>
<gene>
    <name evidence="1" type="primary">rplQ</name>
    <name type="ordered locus">DvMF_0106</name>
</gene>
<name>RL17_NITV9</name>
<proteinExistence type="inferred from homology"/>
<sequence>MRHSNSGKKLGRTPSHRKALFRNMAKALLTYGKIRTTETKAKELRRIVEPLITLALRNDLHSRRLAYDVLGSHQLVKRLFDDIGPAFVGVSGGFTRVVKLGLPRKGDNAPLAVIELTHQPAAEAPAEEKKAAE</sequence>
<evidence type="ECO:0000255" key="1">
    <source>
        <dbReference type="HAMAP-Rule" id="MF_01368"/>
    </source>
</evidence>
<evidence type="ECO:0000305" key="2"/>
<feature type="chain" id="PRO_1000144413" description="Large ribosomal subunit protein bL17">
    <location>
        <begin position="1"/>
        <end position="133"/>
    </location>
</feature>
<comment type="subunit">
    <text evidence="1">Part of the 50S ribosomal subunit. Contacts protein L32.</text>
</comment>
<comment type="similarity">
    <text evidence="1">Belongs to the bacterial ribosomal protein bL17 family.</text>
</comment>